<keyword id="KW-0963">Cytoplasm</keyword>
<keyword id="KW-0489">Methyltransferase</keyword>
<keyword id="KW-0545">Nucleotide biosynthesis</keyword>
<keyword id="KW-1185">Reference proteome</keyword>
<keyword id="KW-0808">Transferase</keyword>
<dbReference type="EC" id="2.1.1.45" evidence="1"/>
<dbReference type="EMBL" id="CP000248">
    <property type="protein sequence ID" value="ABD26417.1"/>
    <property type="status" value="ALT_INIT"/>
    <property type="molecule type" value="Genomic_DNA"/>
</dbReference>
<dbReference type="RefSeq" id="WP_041550282.1">
    <property type="nucleotide sequence ID" value="NC_007794.1"/>
</dbReference>
<dbReference type="SMR" id="Q2G6V6"/>
<dbReference type="STRING" id="279238.Saro_1977"/>
<dbReference type="KEGG" id="nar:Saro_1977"/>
<dbReference type="eggNOG" id="COG0207">
    <property type="taxonomic scope" value="Bacteria"/>
</dbReference>
<dbReference type="HOGENOM" id="CLU_021669_0_0_5"/>
<dbReference type="UniPathway" id="UPA00575"/>
<dbReference type="Proteomes" id="UP000009134">
    <property type="component" value="Chromosome"/>
</dbReference>
<dbReference type="GO" id="GO:0005829">
    <property type="term" value="C:cytosol"/>
    <property type="evidence" value="ECO:0007669"/>
    <property type="project" value="TreeGrafter"/>
</dbReference>
<dbReference type="GO" id="GO:0004799">
    <property type="term" value="F:thymidylate synthase activity"/>
    <property type="evidence" value="ECO:0007669"/>
    <property type="project" value="UniProtKB-UniRule"/>
</dbReference>
<dbReference type="GO" id="GO:0006231">
    <property type="term" value="P:dTMP biosynthetic process"/>
    <property type="evidence" value="ECO:0007669"/>
    <property type="project" value="UniProtKB-UniRule"/>
</dbReference>
<dbReference type="GO" id="GO:0006235">
    <property type="term" value="P:dTTP biosynthetic process"/>
    <property type="evidence" value="ECO:0007669"/>
    <property type="project" value="UniProtKB-UniRule"/>
</dbReference>
<dbReference type="GO" id="GO:0032259">
    <property type="term" value="P:methylation"/>
    <property type="evidence" value="ECO:0007669"/>
    <property type="project" value="UniProtKB-KW"/>
</dbReference>
<dbReference type="CDD" id="cd00351">
    <property type="entry name" value="TS_Pyrimidine_HMase"/>
    <property type="match status" value="1"/>
</dbReference>
<dbReference type="Gene3D" id="3.30.572.10">
    <property type="entry name" value="Thymidylate synthase/dCMP hydroxymethylase domain"/>
    <property type="match status" value="1"/>
</dbReference>
<dbReference type="HAMAP" id="MF_00008">
    <property type="entry name" value="Thymidy_synth_bact"/>
    <property type="match status" value="1"/>
</dbReference>
<dbReference type="InterPro" id="IPR045097">
    <property type="entry name" value="Thymidate_synth/dCMP_Mease"/>
</dbReference>
<dbReference type="InterPro" id="IPR023451">
    <property type="entry name" value="Thymidate_synth/dCMP_Mease_dom"/>
</dbReference>
<dbReference type="InterPro" id="IPR036926">
    <property type="entry name" value="Thymidate_synth/dCMP_Mease_sf"/>
</dbReference>
<dbReference type="InterPro" id="IPR000398">
    <property type="entry name" value="Thymidylate_synthase"/>
</dbReference>
<dbReference type="InterPro" id="IPR020940">
    <property type="entry name" value="Thymidylate_synthase_AS"/>
</dbReference>
<dbReference type="NCBIfam" id="TIGR03284">
    <property type="entry name" value="thym_sym"/>
    <property type="match status" value="1"/>
</dbReference>
<dbReference type="PANTHER" id="PTHR11548">
    <property type="entry name" value="THYMIDYLATE SYNTHASE 1"/>
    <property type="match status" value="1"/>
</dbReference>
<dbReference type="PANTHER" id="PTHR11548:SF1">
    <property type="entry name" value="THYMIDYLATE SYNTHASE 1"/>
    <property type="match status" value="1"/>
</dbReference>
<dbReference type="Pfam" id="PF00303">
    <property type="entry name" value="Thymidylat_synt"/>
    <property type="match status" value="1"/>
</dbReference>
<dbReference type="PRINTS" id="PR00108">
    <property type="entry name" value="THYMDSNTHASE"/>
</dbReference>
<dbReference type="SUPFAM" id="SSF55831">
    <property type="entry name" value="Thymidylate synthase/dCMP hydroxymethylase"/>
    <property type="match status" value="1"/>
</dbReference>
<dbReference type="PROSITE" id="PS00091">
    <property type="entry name" value="THYMIDYLATE_SYNTHASE"/>
    <property type="match status" value="1"/>
</dbReference>
<sequence>MSILRDSGRHYEWQYLDLMRRIWEHGDERVDRTGVGTRSVFGAELRFDLSDGRMPLLTTKRVYWKTATREFLWFLTGNTNIRPLCAQGVEIWTDWPLDRYRKETGDDISRKDFSARIVADEAFALRWGDLGPVYGKQWVDWPVFEPVGDGLFRRREAGVNQVADVVDSLRHNPGSRRHIIEGWNVAEIDRMALPPCHKTYQFHVSGNRLNGLLYQRSCDVALGLPFNLWGAALLVRLLAQQCDLQPGELVWMGGDTHLYLNHADLVEAQLSREPEGDPRLAILRRPDSIFGYRIEDFEVTGYAPQGHLSAPVAV</sequence>
<evidence type="ECO:0000255" key="1">
    <source>
        <dbReference type="HAMAP-Rule" id="MF_00008"/>
    </source>
</evidence>
<evidence type="ECO:0000305" key="2"/>
<name>TYSY_NOVAD</name>
<accession>Q2G6V6</accession>
<protein>
    <recommendedName>
        <fullName evidence="1">Thymidylate synthase</fullName>
        <shortName evidence="1">TS</shortName>
        <shortName evidence="1">TSase</shortName>
        <ecNumber evidence="1">2.1.1.45</ecNumber>
    </recommendedName>
</protein>
<proteinExistence type="inferred from homology"/>
<comment type="function">
    <text evidence="1">Catalyzes the reductive methylation of 2'-deoxyuridine-5'-monophosphate (dUMP) to 2'-deoxythymidine-5'-monophosphate (dTMP) while utilizing 5,10-methylenetetrahydrofolate (mTHF) as the methyl donor and reductant in the reaction, yielding dihydrofolate (DHF) as a by-product. This enzymatic reaction provides an intracellular de novo source of dTMP, an essential precursor for DNA biosynthesis.</text>
</comment>
<comment type="catalytic activity">
    <reaction evidence="1">
        <text>dUMP + (6R)-5,10-methylene-5,6,7,8-tetrahydrofolate = 7,8-dihydrofolate + dTMP</text>
        <dbReference type="Rhea" id="RHEA:12104"/>
        <dbReference type="ChEBI" id="CHEBI:15636"/>
        <dbReference type="ChEBI" id="CHEBI:57451"/>
        <dbReference type="ChEBI" id="CHEBI:63528"/>
        <dbReference type="ChEBI" id="CHEBI:246422"/>
        <dbReference type="EC" id="2.1.1.45"/>
    </reaction>
</comment>
<comment type="pathway">
    <text evidence="1">Pyrimidine metabolism; dTTP biosynthesis.</text>
</comment>
<comment type="subunit">
    <text evidence="1">Homodimer.</text>
</comment>
<comment type="subcellular location">
    <subcellularLocation>
        <location evidence="1">Cytoplasm</location>
    </subcellularLocation>
</comment>
<comment type="similarity">
    <text evidence="1">Belongs to the thymidylate synthase family. Bacterial-type ThyA subfamily.</text>
</comment>
<comment type="sequence caution" evidence="2">
    <conflict type="erroneous initiation">
        <sequence resource="EMBL-CDS" id="ABD26417"/>
    </conflict>
</comment>
<reference key="1">
    <citation type="submission" date="2006-01" db="EMBL/GenBank/DDBJ databases">
        <title>Complete sequence of Novosphingobium aromaticivorans DSM 12444.</title>
        <authorList>
            <consortium name="US DOE Joint Genome Institute"/>
            <person name="Copeland A."/>
            <person name="Lucas S."/>
            <person name="Lapidus A."/>
            <person name="Barry K."/>
            <person name="Detter J.C."/>
            <person name="Glavina T."/>
            <person name="Hammon N."/>
            <person name="Israni S."/>
            <person name="Pitluck S."/>
            <person name="Chain P."/>
            <person name="Malfatti S."/>
            <person name="Shin M."/>
            <person name="Vergez L."/>
            <person name="Schmutz J."/>
            <person name="Larimer F."/>
            <person name="Land M."/>
            <person name="Kyrpides N."/>
            <person name="Ivanova N."/>
            <person name="Fredrickson J."/>
            <person name="Balkwill D."/>
            <person name="Romine M.F."/>
            <person name="Richardson P."/>
        </authorList>
    </citation>
    <scope>NUCLEOTIDE SEQUENCE [LARGE SCALE GENOMIC DNA]</scope>
    <source>
        <strain>ATCC 700278 / DSM 12444 / CCUG 56034 / CIP 105152 / NBRC 16084 / F199</strain>
    </source>
</reference>
<gene>
    <name evidence="1" type="primary">thyA</name>
    <name type="ordered locus">Saro_1977</name>
</gene>
<feature type="chain" id="PRO_0000321472" description="Thymidylate synthase">
    <location>
        <begin position="1"/>
        <end position="314"/>
    </location>
</feature>
<feature type="active site" description="Nucleophile" evidence="1">
    <location>
        <position position="196"/>
    </location>
</feature>
<feature type="binding site" description="in other chain" evidence="1">
    <location>
        <position position="32"/>
    </location>
    <ligand>
        <name>dUMP</name>
        <dbReference type="ChEBI" id="CHEBI:246422"/>
        <note>ligand shared between dimeric partners</note>
    </ligand>
</feature>
<feature type="binding site" evidence="1">
    <location>
        <begin position="176"/>
        <end position="177"/>
    </location>
    <ligand>
        <name>dUMP</name>
        <dbReference type="ChEBI" id="CHEBI:246422"/>
        <note>ligand shared between dimeric partners</note>
    </ligand>
</feature>
<feature type="binding site" description="in other chain" evidence="1">
    <location>
        <begin position="216"/>
        <end position="219"/>
    </location>
    <ligand>
        <name>dUMP</name>
        <dbReference type="ChEBI" id="CHEBI:246422"/>
        <note>ligand shared between dimeric partners</note>
    </ligand>
</feature>
<feature type="binding site" evidence="1">
    <location>
        <position position="219"/>
    </location>
    <ligand>
        <name>(6R)-5,10-methylene-5,6,7,8-tetrahydrofolate</name>
        <dbReference type="ChEBI" id="CHEBI:15636"/>
    </ligand>
</feature>
<feature type="binding site" description="in other chain" evidence="1">
    <location>
        <position position="227"/>
    </location>
    <ligand>
        <name>dUMP</name>
        <dbReference type="ChEBI" id="CHEBI:246422"/>
        <note>ligand shared between dimeric partners</note>
    </ligand>
</feature>
<feature type="binding site" description="in other chain" evidence="1">
    <location>
        <begin position="257"/>
        <end position="259"/>
    </location>
    <ligand>
        <name>dUMP</name>
        <dbReference type="ChEBI" id="CHEBI:246422"/>
        <note>ligand shared between dimeric partners</note>
    </ligand>
</feature>
<feature type="binding site" evidence="1">
    <location>
        <position position="313"/>
    </location>
    <ligand>
        <name>(6R)-5,10-methylene-5,6,7,8-tetrahydrofolate</name>
        <dbReference type="ChEBI" id="CHEBI:15636"/>
    </ligand>
</feature>
<organism>
    <name type="scientific">Novosphingobium aromaticivorans (strain ATCC 700278 / DSM 12444 / CCUG 56034 / CIP 105152 / NBRC 16084 / F199)</name>
    <dbReference type="NCBI Taxonomy" id="279238"/>
    <lineage>
        <taxon>Bacteria</taxon>
        <taxon>Pseudomonadati</taxon>
        <taxon>Pseudomonadota</taxon>
        <taxon>Alphaproteobacteria</taxon>
        <taxon>Sphingomonadales</taxon>
        <taxon>Sphingomonadaceae</taxon>
        <taxon>Novosphingobium</taxon>
    </lineage>
</organism>